<keyword id="KW-0030">Aminoacyl-tRNA synthetase</keyword>
<keyword id="KW-0067">ATP-binding</keyword>
<keyword id="KW-0963">Cytoplasm</keyword>
<keyword id="KW-0436">Ligase</keyword>
<keyword id="KW-0547">Nucleotide-binding</keyword>
<keyword id="KW-0648">Protein biosynthesis</keyword>
<sequence>MNQIEQKWQYIWQEEKAFEVSNASSKPKYYVLEMLPYPSGKIHVGHVRNYSIGDVIARFMTMQGFNVLHPMGWDAFGLPAEHAAIKNNSHPKKWTYSNIKNMKKQLKSMGFSYDWSREINSCDPEYYKHEQKFFLELYERNLAYQKESFVNWDPVDNTVLANEQVVDGRGWRSGAIVVKRYLKQWFLKITDYAEELLNEIQNLKEWPEAVRSMQEKWIGKSIGANFHFKIKDNEETTIEVFSTKPETIFGASFIGIAFNHPIIERLVSKTPEILAFITQCSHITRSSELEKTEREGVFTGLFVIHPFDSNIVLPVIITNFVLMDYGTGAIFGCPAHDECDHELAVKMNLSIKQVIKADMDVQKTAYTEDGILINSDFLNGLTSHEAKQEVIGEFEKLGIGKRSVNYRLKDWGISRQRFWGCPIPMIHCEICGIVPVPYKDLPVILPDDVNFDGHGNPLDHHPSWKHVNCPKCDKPAVRETDTFDTFFESSWYFMRYCNSNATEMTDKKACDYWLPVDKYIGGIEHAVMHLLYARFFTKVMNEQNYVSVREPFKGLFTQGMVLHATYKDEHNNWLYPEEVVKKGNEFFHKESNNRVVQGRIEKMSKSKKNLIDLETMQEQYGADAIRLFVLSDSPPEKDLEWSASGIEGCSRFINKLEYMFKAIDSLKDDVNSEVNKELNRLVHFTIKHVAEDIKHFALNRAIARMRELSNAISAEISKDKIDVKTVRHGFNVLVQLLNPFIPHITEEIWQKLGNKERLYNLSFPAFDESMLELDTYIMAVQVNGKLRDTYEFKTSVSEDEIKQVTVSLPKVQKFLEGQEPKKIILVPRKIVNILV</sequence>
<reference key="1">
    <citation type="journal article" date="2009" name="BMC Genomics">
        <title>Analysis of the Rickettsia africae genome reveals that virulence acquisition in Rickettsia species may be explained by genome reduction.</title>
        <authorList>
            <person name="Fournier P.-E."/>
            <person name="El Karkouri K."/>
            <person name="Leroy Q."/>
            <person name="Robert C."/>
            <person name="Giumelli B."/>
            <person name="Renesto P."/>
            <person name="Socolovschi C."/>
            <person name="Parola P."/>
            <person name="Audic S."/>
            <person name="Raoult D."/>
        </authorList>
    </citation>
    <scope>NUCLEOTIDE SEQUENCE [LARGE SCALE GENOMIC DNA]</scope>
    <source>
        <strain>ESF-5</strain>
    </source>
</reference>
<feature type="chain" id="PRO_1000202227" description="Leucine--tRNA ligase">
    <location>
        <begin position="1"/>
        <end position="835"/>
    </location>
</feature>
<feature type="short sequence motif" description="'HIGH' region">
    <location>
        <begin position="36"/>
        <end position="46"/>
    </location>
</feature>
<feature type="short sequence motif" description="'KMSKS' region">
    <location>
        <begin position="602"/>
        <end position="606"/>
    </location>
</feature>
<feature type="binding site" evidence="1">
    <location>
        <position position="605"/>
    </location>
    <ligand>
        <name>ATP</name>
        <dbReference type="ChEBI" id="CHEBI:30616"/>
    </ligand>
</feature>
<gene>
    <name evidence="1" type="primary">leuS</name>
    <name type="ordered locus">RAF_ORF0546</name>
</gene>
<name>SYL_RICAE</name>
<protein>
    <recommendedName>
        <fullName evidence="1">Leucine--tRNA ligase</fullName>
        <ecNumber evidence="1">6.1.1.4</ecNumber>
    </recommendedName>
    <alternativeName>
        <fullName evidence="1">Leucyl-tRNA synthetase</fullName>
        <shortName evidence="1">LeuRS</shortName>
    </alternativeName>
</protein>
<dbReference type="EC" id="6.1.1.4" evidence="1"/>
<dbReference type="EMBL" id="CP001612">
    <property type="protein sequence ID" value="ACP53457.1"/>
    <property type="molecule type" value="Genomic_DNA"/>
</dbReference>
<dbReference type="RefSeq" id="WP_012719678.1">
    <property type="nucleotide sequence ID" value="NC_012633.1"/>
</dbReference>
<dbReference type="SMR" id="C3PNE7"/>
<dbReference type="KEGG" id="raf:RAF_ORF0546"/>
<dbReference type="HOGENOM" id="CLU_004427_0_0_5"/>
<dbReference type="Proteomes" id="UP000002305">
    <property type="component" value="Chromosome"/>
</dbReference>
<dbReference type="GO" id="GO:0005737">
    <property type="term" value="C:cytoplasm"/>
    <property type="evidence" value="ECO:0007669"/>
    <property type="project" value="UniProtKB-SubCell"/>
</dbReference>
<dbReference type="GO" id="GO:0002161">
    <property type="term" value="F:aminoacyl-tRNA deacylase activity"/>
    <property type="evidence" value="ECO:0007669"/>
    <property type="project" value="InterPro"/>
</dbReference>
<dbReference type="GO" id="GO:0005524">
    <property type="term" value="F:ATP binding"/>
    <property type="evidence" value="ECO:0007669"/>
    <property type="project" value="UniProtKB-UniRule"/>
</dbReference>
<dbReference type="GO" id="GO:0004823">
    <property type="term" value="F:leucine-tRNA ligase activity"/>
    <property type="evidence" value="ECO:0007669"/>
    <property type="project" value="UniProtKB-UniRule"/>
</dbReference>
<dbReference type="GO" id="GO:0006429">
    <property type="term" value="P:leucyl-tRNA aminoacylation"/>
    <property type="evidence" value="ECO:0007669"/>
    <property type="project" value="UniProtKB-UniRule"/>
</dbReference>
<dbReference type="CDD" id="cd07958">
    <property type="entry name" value="Anticodon_Ia_Leu_BEm"/>
    <property type="match status" value="1"/>
</dbReference>
<dbReference type="CDD" id="cd00812">
    <property type="entry name" value="LeuRS_core"/>
    <property type="match status" value="1"/>
</dbReference>
<dbReference type="FunFam" id="1.10.730.10:FF:000081">
    <property type="entry name" value="Leucine--tRNA ligase"/>
    <property type="match status" value="1"/>
</dbReference>
<dbReference type="FunFam" id="3.40.50.620:FF:000003">
    <property type="entry name" value="Leucine--tRNA ligase"/>
    <property type="match status" value="1"/>
</dbReference>
<dbReference type="FunFam" id="3.40.50.620:FF:000051">
    <property type="entry name" value="Leucine--tRNA ligase"/>
    <property type="match status" value="1"/>
</dbReference>
<dbReference type="Gene3D" id="2.20.28.290">
    <property type="match status" value="1"/>
</dbReference>
<dbReference type="Gene3D" id="3.10.20.590">
    <property type="match status" value="1"/>
</dbReference>
<dbReference type="Gene3D" id="3.40.50.620">
    <property type="entry name" value="HUPs"/>
    <property type="match status" value="2"/>
</dbReference>
<dbReference type="Gene3D" id="1.10.730.10">
    <property type="entry name" value="Isoleucyl-tRNA Synthetase, Domain 1"/>
    <property type="match status" value="1"/>
</dbReference>
<dbReference type="HAMAP" id="MF_00049_B">
    <property type="entry name" value="Leu_tRNA_synth_B"/>
    <property type="match status" value="1"/>
</dbReference>
<dbReference type="InterPro" id="IPR001412">
    <property type="entry name" value="aa-tRNA-synth_I_CS"/>
</dbReference>
<dbReference type="InterPro" id="IPR002300">
    <property type="entry name" value="aa-tRNA-synth_Ia"/>
</dbReference>
<dbReference type="InterPro" id="IPR002302">
    <property type="entry name" value="Leu-tRNA-ligase"/>
</dbReference>
<dbReference type="InterPro" id="IPR025709">
    <property type="entry name" value="Leu_tRNA-synth_edit"/>
</dbReference>
<dbReference type="InterPro" id="IPR013155">
    <property type="entry name" value="M/V/L/I-tRNA-synth_anticd-bd"/>
</dbReference>
<dbReference type="InterPro" id="IPR015413">
    <property type="entry name" value="Methionyl/Leucyl_tRNA_Synth"/>
</dbReference>
<dbReference type="InterPro" id="IPR014729">
    <property type="entry name" value="Rossmann-like_a/b/a_fold"/>
</dbReference>
<dbReference type="InterPro" id="IPR009080">
    <property type="entry name" value="tRNAsynth_Ia_anticodon-bd"/>
</dbReference>
<dbReference type="InterPro" id="IPR009008">
    <property type="entry name" value="Val/Leu/Ile-tRNA-synth_edit"/>
</dbReference>
<dbReference type="NCBIfam" id="TIGR00396">
    <property type="entry name" value="leuS_bact"/>
    <property type="match status" value="1"/>
</dbReference>
<dbReference type="PANTHER" id="PTHR43740:SF2">
    <property type="entry name" value="LEUCINE--TRNA LIGASE, MITOCHONDRIAL"/>
    <property type="match status" value="1"/>
</dbReference>
<dbReference type="PANTHER" id="PTHR43740">
    <property type="entry name" value="LEUCYL-TRNA SYNTHETASE"/>
    <property type="match status" value="1"/>
</dbReference>
<dbReference type="Pfam" id="PF08264">
    <property type="entry name" value="Anticodon_1"/>
    <property type="match status" value="1"/>
</dbReference>
<dbReference type="Pfam" id="PF00133">
    <property type="entry name" value="tRNA-synt_1"/>
    <property type="match status" value="2"/>
</dbReference>
<dbReference type="Pfam" id="PF13603">
    <property type="entry name" value="tRNA-synt_1_2"/>
    <property type="match status" value="1"/>
</dbReference>
<dbReference type="Pfam" id="PF09334">
    <property type="entry name" value="tRNA-synt_1g"/>
    <property type="match status" value="1"/>
</dbReference>
<dbReference type="PRINTS" id="PR00985">
    <property type="entry name" value="TRNASYNTHLEU"/>
</dbReference>
<dbReference type="SUPFAM" id="SSF47323">
    <property type="entry name" value="Anticodon-binding domain of a subclass of class I aminoacyl-tRNA synthetases"/>
    <property type="match status" value="1"/>
</dbReference>
<dbReference type="SUPFAM" id="SSF52374">
    <property type="entry name" value="Nucleotidylyl transferase"/>
    <property type="match status" value="1"/>
</dbReference>
<dbReference type="SUPFAM" id="SSF50677">
    <property type="entry name" value="ValRS/IleRS/LeuRS editing domain"/>
    <property type="match status" value="1"/>
</dbReference>
<dbReference type="PROSITE" id="PS00178">
    <property type="entry name" value="AA_TRNA_LIGASE_I"/>
    <property type="match status" value="1"/>
</dbReference>
<evidence type="ECO:0000255" key="1">
    <source>
        <dbReference type="HAMAP-Rule" id="MF_00049"/>
    </source>
</evidence>
<organism>
    <name type="scientific">Rickettsia africae (strain ESF-5)</name>
    <dbReference type="NCBI Taxonomy" id="347255"/>
    <lineage>
        <taxon>Bacteria</taxon>
        <taxon>Pseudomonadati</taxon>
        <taxon>Pseudomonadota</taxon>
        <taxon>Alphaproteobacteria</taxon>
        <taxon>Rickettsiales</taxon>
        <taxon>Rickettsiaceae</taxon>
        <taxon>Rickettsieae</taxon>
        <taxon>Rickettsia</taxon>
        <taxon>spotted fever group</taxon>
    </lineage>
</organism>
<comment type="catalytic activity">
    <reaction evidence="1">
        <text>tRNA(Leu) + L-leucine + ATP = L-leucyl-tRNA(Leu) + AMP + diphosphate</text>
        <dbReference type="Rhea" id="RHEA:11688"/>
        <dbReference type="Rhea" id="RHEA-COMP:9613"/>
        <dbReference type="Rhea" id="RHEA-COMP:9622"/>
        <dbReference type="ChEBI" id="CHEBI:30616"/>
        <dbReference type="ChEBI" id="CHEBI:33019"/>
        <dbReference type="ChEBI" id="CHEBI:57427"/>
        <dbReference type="ChEBI" id="CHEBI:78442"/>
        <dbReference type="ChEBI" id="CHEBI:78494"/>
        <dbReference type="ChEBI" id="CHEBI:456215"/>
        <dbReference type="EC" id="6.1.1.4"/>
    </reaction>
</comment>
<comment type="subcellular location">
    <subcellularLocation>
        <location evidence="1">Cytoplasm</location>
    </subcellularLocation>
</comment>
<comment type="similarity">
    <text evidence="1">Belongs to the class-I aminoacyl-tRNA synthetase family.</text>
</comment>
<proteinExistence type="inferred from homology"/>
<accession>C3PNE7</accession>